<accession>G1TUB8</accession>
<feature type="initiator methionine" description="Removed" evidence="1">
    <location>
        <position position="1"/>
    </location>
</feature>
<feature type="chain" id="PRO_0000460099" description="Large ribosomal subunit protein uL5">
    <location>
        <begin position="2"/>
        <end position="178"/>
    </location>
</feature>
<feature type="modified residue" description="N-acetylalanine" evidence="1">
    <location>
        <position position="2"/>
    </location>
</feature>
<feature type="modified residue" description="Phosphothreonine" evidence="1">
    <location>
        <position position="44"/>
    </location>
</feature>
<feature type="modified residue" description="Phosphothreonine" evidence="1">
    <location>
        <position position="47"/>
    </location>
</feature>
<feature type="modified residue" description="N6-acetyllysine; alternate" evidence="1">
    <location>
        <position position="52"/>
    </location>
</feature>
<feature type="modified residue" description="N6-acetyllysine" evidence="1">
    <location>
        <position position="85"/>
    </location>
</feature>
<feature type="cross-link" description="Glycyl lysine isopeptide (Lys-Gly) (interchain with G-Cter in SUMO2)" evidence="1">
    <location>
        <position position="38"/>
    </location>
</feature>
<feature type="cross-link" description="Glycyl lysine isopeptide (Lys-Gly) (interchain with G-Cter in SUMO2); alternate" evidence="1">
    <location>
        <position position="52"/>
    </location>
</feature>
<feature type="cross-link" description="Glycyl lysine isopeptide (Lys-Gly) (interchain with G-Cter in SUMO2)" evidence="1">
    <location>
        <position position="154"/>
    </location>
</feature>
<sequence>MAQDQGEKENPMRELRIRKLCLNICVGESGDRLTRAAKVLEQLTGQTPVFSKARYTVRSFGIRRNEKIAVHCTVRGAKAEEILEKGLKVREYELRKNNFSDTGNFGFGIQEHIDLGIKYDPSIGIYGLDFYVVLGRPGFSIADKKRRTGCIGAKHRISKEEAMRWFQQKYDGIILPGK</sequence>
<keyword id="KW-0002">3D-structure</keyword>
<keyword id="KW-0007">Acetylation</keyword>
<keyword id="KW-0963">Cytoplasm</keyword>
<keyword id="KW-1017">Isopeptide bond</keyword>
<keyword id="KW-0539">Nucleus</keyword>
<keyword id="KW-0597">Phosphoprotein</keyword>
<keyword id="KW-1185">Reference proteome</keyword>
<keyword id="KW-0687">Ribonucleoprotein</keyword>
<keyword id="KW-0689">Ribosomal protein</keyword>
<keyword id="KW-0694">RNA-binding</keyword>
<keyword id="KW-0699">rRNA-binding</keyword>
<keyword id="KW-0832">Ubl conjugation</keyword>
<reference key="1">
    <citation type="journal article" date="2011" name="Nature">
        <title>A high-resolution map of human evolutionary constraint using 29 mammals.</title>
        <authorList>
            <person name="Lindblad-Toh K."/>
            <person name="Garber M."/>
            <person name="Zuk O."/>
            <person name="Lin M.F."/>
            <person name="Parker B.J."/>
            <person name="Washietl S."/>
            <person name="Kheradpour P."/>
            <person name="Ernst J."/>
            <person name="Jordan G."/>
            <person name="Mauceli E."/>
            <person name="Ward L.D."/>
            <person name="Lowe C.B."/>
            <person name="Holloway A.K."/>
            <person name="Clamp M."/>
            <person name="Gnerre S."/>
            <person name="Alfoldi J."/>
            <person name="Beal K."/>
            <person name="Chang J."/>
            <person name="Clawson H."/>
            <person name="Cuff J."/>
            <person name="Di Palma F."/>
            <person name="Fitzgerald S."/>
            <person name="Flicek P."/>
            <person name="Guttman M."/>
            <person name="Hubisz M.J."/>
            <person name="Jaffe D.B."/>
            <person name="Jungreis I."/>
            <person name="Kent W.J."/>
            <person name="Kostka D."/>
            <person name="Lara M."/>
            <person name="Martins A.L."/>
            <person name="Massingham T."/>
            <person name="Moltke I."/>
            <person name="Raney B.J."/>
            <person name="Rasmussen M.D."/>
            <person name="Robinson J."/>
            <person name="Stark A."/>
            <person name="Vilella A.J."/>
            <person name="Wen J."/>
            <person name="Xie X."/>
            <person name="Zody M.C."/>
            <person name="Baldwin J."/>
            <person name="Bloom T."/>
            <person name="Chin C.W."/>
            <person name="Heiman D."/>
            <person name="Nicol R."/>
            <person name="Nusbaum C."/>
            <person name="Young S."/>
            <person name="Wilkinson J."/>
            <person name="Worley K.C."/>
            <person name="Kovar C.L."/>
            <person name="Muzny D.M."/>
            <person name="Gibbs R.A."/>
            <person name="Cree A."/>
            <person name="Dihn H.H."/>
            <person name="Fowler G."/>
            <person name="Jhangiani S."/>
            <person name="Joshi V."/>
            <person name="Lee S."/>
            <person name="Lewis L.R."/>
            <person name="Nazareth L.V."/>
            <person name="Okwuonu G."/>
            <person name="Santibanez J."/>
            <person name="Warren W.C."/>
            <person name="Mardis E.R."/>
            <person name="Weinstock G.M."/>
            <person name="Wilson R.K."/>
            <person name="Delehaunty K."/>
            <person name="Dooling D."/>
            <person name="Fronik C."/>
            <person name="Fulton L."/>
            <person name="Fulton B."/>
            <person name="Graves T."/>
            <person name="Minx P."/>
            <person name="Sodergren E."/>
            <person name="Birney E."/>
            <person name="Margulies E.H."/>
            <person name="Herrero J."/>
            <person name="Green E.D."/>
            <person name="Haussler D."/>
            <person name="Siepel A."/>
            <person name="Goldman N."/>
            <person name="Pollard K.S."/>
            <person name="Pedersen J.S."/>
            <person name="Lander E.S."/>
            <person name="Kellis M."/>
        </authorList>
    </citation>
    <scope>NUCLEOTIDE SEQUENCE [LARGE SCALE GENOMIC DNA]</scope>
    <source>
        <strain>Thorbecke</strain>
    </source>
</reference>
<reference evidence="17 18" key="2">
    <citation type="journal article" date="2015" name="Nature">
        <title>Structural basis for stop codon recognition in eukaryotes.</title>
        <authorList>
            <person name="Brown A."/>
            <person name="Shao S."/>
            <person name="Murray J."/>
            <person name="Hegde R.S."/>
            <person name="Ramakrishnan V."/>
        </authorList>
    </citation>
    <scope>STRUCTURE BY ELECTRON MICROSCOPY (3.45 ANGSTROMS) OF RIBOSOME</scope>
    <scope>FUNCTION</scope>
    <scope>SUBUNIT</scope>
    <scope>SUBCELLULAR LOCATION</scope>
</reference>
<reference evidence="19" key="3">
    <citation type="journal article" date="2016" name="Cell">
        <title>Decoding mammalian ribosome-mRNA states by translational GTPase complexes.</title>
        <authorList>
            <person name="Shao S."/>
            <person name="Murray J."/>
            <person name="Brown A."/>
            <person name="Taunton J."/>
            <person name="Ramakrishnan V."/>
            <person name="Hegde R.S."/>
        </authorList>
    </citation>
    <scope>STRUCTURE BY ELECTRON MICROSCOPY (3.31 ANGSTROMS) OF RIBOSOME</scope>
    <scope>FUNCTION</scope>
    <scope>SUBCELLULAR LOCATION</scope>
    <scope>SUBUNIT</scope>
</reference>
<reference evidence="23" key="4">
    <citation type="journal article" date="2018" name="Cell Rep.">
        <title>tRNA translocation by the eukaryotic 80S ribosome and the impact of GTP hydrolysis.</title>
        <authorList>
            <person name="Flis J."/>
            <person name="Holm M."/>
            <person name="Rundlet E.J."/>
            <person name="Loerke J."/>
            <person name="Hilal T."/>
            <person name="Dabrowski M."/>
            <person name="Burger J."/>
            <person name="Mielke T."/>
            <person name="Blanchard S.C."/>
            <person name="Spahn C.M.T."/>
            <person name="Budkevich T.V."/>
        </authorList>
    </citation>
    <scope>STRUCTURE BY ELECTRON MICROSCOPY (3.60 ANGSTROMS) OF RIBOSOME</scope>
    <scope>FUNCTION</scope>
    <scope>SUBCELLULAR LOCATION</scope>
    <scope>SUBUNIT</scope>
</reference>
<reference evidence="20" key="5">
    <citation type="journal article" date="2018" name="Elife">
        <title>Dual tRNA mimicry in the Cricket paralysis virus IRES uncovers an unexpected similarity with the Hepatitis C Virus IRES.</title>
        <authorList>
            <person name="Pisareva V.P."/>
            <person name="Pisarev A.V."/>
            <person name="Fernandez I.S."/>
        </authorList>
    </citation>
    <scope>STRUCTURE BY ELECTRON MICROSCOPY (3.20 ANGSTROMS) OF RIBOSOME</scope>
    <scope>SUBUNIT</scope>
    <scope>SUBCELLULAR LOCATION</scope>
</reference>
<reference evidence="26 27" key="6">
    <citation type="journal article" date="2018" name="Elife">
        <title>Structures of translationally inactive mammalian ribosomes.</title>
        <authorList>
            <person name="Brown A."/>
            <person name="Baird M.R."/>
            <person name="Yip M.C."/>
            <person name="Murray J."/>
            <person name="Shao S."/>
        </authorList>
    </citation>
    <scope>STRUCTURE BY ELECTRON MICROSCOPY (3.30 ANGSTROMS) OF RIBOSOME</scope>
    <scope>SUBCELLULAR LOCATION</scope>
    <scope>SUBUNIT</scope>
</reference>
<reference evidence="24 25" key="7">
    <citation type="journal article" date="2018" name="Mol. Cell">
        <title>ZNF598 is a quality control sensor of collided ribosomes.</title>
        <authorList>
            <person name="Juszkiewicz S."/>
            <person name="Chandrasekaran V."/>
            <person name="Lin Z."/>
            <person name="Kraatz S."/>
            <person name="Ramakrishnan V."/>
            <person name="Hegde R.S."/>
        </authorList>
    </citation>
    <scope>STRUCTURE BY ELECTRON MICROSCOPY (3.80 ANGSTROMS) OF RIBOSOME</scope>
    <scope>SUBCELLULAR LOCATION</scope>
    <scope>SUBUNIT</scope>
</reference>
<reference evidence="28 29" key="8">
    <citation type="journal article" date="2019" name="Elife">
        <title>Structural and mutational analysis of the ribosome-arresting human XBP1u.</title>
        <authorList>
            <person name="Shanmuganathan V."/>
            <person name="Schiller N."/>
            <person name="Magoulopoulou A."/>
            <person name="Cheng J."/>
            <person name="Braunger K."/>
            <person name="Cymer F."/>
            <person name="Berninghausen O."/>
            <person name="Beatrix B."/>
            <person name="Kohno K."/>
            <person name="von Heijne G."/>
            <person name="Beckmann R."/>
        </authorList>
    </citation>
    <scope>STRUCTURE BY ELECTRON MICROSCOPY (3.00 ANGSTROMS) OF RIBOSOME</scope>
    <scope>SUBCELLULAR LOCATION</scope>
    <scope>SUBUNIT</scope>
</reference>
<reference evidence="21 22" key="9">
    <citation type="journal article" date="2019" name="EMBO J.">
        <title>The Israeli acute paralysis virus IRES captures host ribosomes by mimicking a ribosomal state with hybrid tRNAs.</title>
        <authorList>
            <person name="Acosta-Reyes F."/>
            <person name="Neupane R."/>
            <person name="Frank J."/>
            <person name="Fernandez I.S."/>
        </authorList>
    </citation>
    <scope>STRUCTURE BY ELECTRON MICROSCOPY (3.10 ANGSTROMS) OF RIBOSOME</scope>
    <scope>SUBUNIT</scope>
    <scope>SUBCELLULAR LOCATION</scope>
</reference>
<reference evidence="30" key="10">
    <citation type="journal article" date="2019" name="Nat. Struct. Mol. Biol.">
        <title>Mechanism of ribosome stalling during translation of a poly(A) tail.</title>
        <authorList>
            <person name="Chandrasekaran V."/>
            <person name="Juszkiewicz S."/>
            <person name="Choi J."/>
            <person name="Puglisi J.D."/>
            <person name="Brown A."/>
            <person name="Shao S."/>
            <person name="Ramakrishnan V."/>
            <person name="Hegde R.S."/>
        </authorList>
    </citation>
    <scope>STRUCTURE BY ELECTRON MICROSCOPY (2.80 ANGSTROMS) OF RIBOSOME</scope>
    <scope>SUBCELLULAR LOCATION</scope>
    <scope>SUBUNIT</scope>
</reference>
<reference evidence="31 32" key="11">
    <citation type="journal article" date="2020" name="Cell Rep.">
        <title>The Halastavi arva virus intergenic region IRES promotes translation by the simplest possible initiation mechanism.</title>
        <authorList>
            <person name="Abaeva I.S."/>
            <person name="Vicens Q."/>
            <person name="Bochler A."/>
            <person name="Soufari H."/>
            <person name="Simonetti A."/>
            <person name="Pestova T.V."/>
            <person name="Hashem Y."/>
            <person name="Hellen C.U.T."/>
        </authorList>
    </citation>
    <scope>STRUCTURE BY ELECTRON MICROSCOPY (3.49 ANGSTROMS) OF RIBOSOME</scope>
    <scope>SUBCELLULAR LOCATION</scope>
    <scope>SUBUNIT</scope>
</reference>
<reference evidence="34 35" key="12">
    <citation type="journal article" date="2022" name="Mol. Cell">
        <title>Direct epitranscriptomic regulation of mammalian translation initiation through N4-acetylcytidine.</title>
        <authorList>
            <person name="Arango D."/>
            <person name="Sturgill D."/>
            <person name="Yang R."/>
            <person name="Kanai T."/>
            <person name="Bauer P."/>
            <person name="Roy J."/>
            <person name="Wang Z."/>
            <person name="Hosogane M."/>
            <person name="Schiffers S."/>
            <person name="Oberdoerffer S."/>
        </authorList>
    </citation>
    <scope>STRUCTURE BY ELECTRON MICROSCOPY (2.80 ANGSTROMS) OF RIBOSOME</scope>
    <scope>SUBCELLULAR LOCATION</scope>
    <scope>SUBUNIT</scope>
</reference>
<reference evidence="36 37" key="13">
    <citation type="journal article" date="2022" name="Science">
        <title>Structure of the mammalian ribosome as it decodes the selenocysteine UGA codon.</title>
        <authorList>
            <person name="Hilal T."/>
            <person name="Killam B.Y."/>
            <person name="Grozdanovic M."/>
            <person name="Dobosz-Bartoszek M."/>
            <person name="Loerke J."/>
            <person name="Buerger J."/>
            <person name="Mielke T."/>
            <person name="Copeland P.R."/>
            <person name="Simonovic M."/>
            <person name="Spahn C.M.T."/>
        </authorList>
    </citation>
    <scope>STRUCTURE BY ELECTRON MICROSCOPY (2.80 ANGSTROMS) OF RIBOSOME</scope>
    <scope>SUBCELLULAR LOCATION</scope>
    <scope>SUBUNIT</scope>
</reference>
<reference evidence="33" key="14">
    <citation type="journal article" date="2023" name="Nature">
        <title>A molecular network of conserved factors keeps ribosomes dormant in the egg.</title>
        <authorList>
            <person name="Leesch F."/>
            <person name="Lorenzo-Orts L."/>
            <person name="Pribitzer C."/>
            <person name="Grishkovskaya I."/>
            <person name="Roehsner J."/>
            <person name="Chugunova A."/>
            <person name="Matzinger M."/>
            <person name="Roitinger E."/>
            <person name="Belacic K."/>
            <person name="Kandolf S."/>
            <person name="Lin T.Y."/>
            <person name="Mechtler K."/>
            <person name="Meinhart A."/>
            <person name="Haselbach D."/>
            <person name="Pauli A."/>
        </authorList>
    </citation>
    <scope>STRUCTURE BY ELECTRON MICROSCOPY (2.30 ANGSTROMS) OF RIBOSOME</scope>
    <scope>SUBCELLULAR LOCATION</scope>
    <scope>SUBUNIT</scope>
</reference>
<protein>
    <recommendedName>
        <fullName>Large ribosomal subunit protein uL5</fullName>
    </recommendedName>
    <alternativeName>
        <fullName>60S ribosomal protein L11</fullName>
    </alternativeName>
</protein>
<comment type="function">
    <text evidence="1 2 3 4 8">Component of the ribosome, a large ribonucleoprotein complex responsible for the synthesis of proteins in the cell (PubMed:26245381, PubMed:27863242, PubMed:30517857). The small ribosomal subunit (SSU) binds messenger RNAs (mRNAs) and translates the encoded message by selecting cognate aminoacyl-transfer RNA (tRNA) molecules (PubMed:26245381, PubMed:27863242, PubMed:30517857). The large subunit (LSU) contains the ribosomal catalytic site termed the peptidyl transferase center (PTC), which catalyzes the formation of peptide bonds, thereby polymerizing the amino acids delivered by tRNAs into a polypeptide chain (PubMed:26245381, PubMed:27863242, PubMed:30517857). The nascent polypeptides leave the ribosome through a tunnel in the LSU and interact with protein factors that function in enzymatic processing, targeting, and the membrane insertion of nascent chains at the exit of the ribosomal tunnel (PubMed:26245381, PubMed:27863242, PubMed:30517857). As part of the 5S RNP/5S ribonucleoprotein particle it is an essential component of the LSU, required for its formation and the maturation of rRNAs (By similarity). It also couples ribosome biogenesis to p53/TP53 activation (By similarity). As part of the 5S RNP it accumulates in the nucleoplasm and inhibits MDM2, when ribosome biogenesis is perturbed, mediating the stabilization and the activation of TP53 (By similarity). Promotes nucleolar location of PML (By similarity).</text>
</comment>
<comment type="subunit">
    <text evidence="1 2 3 4 5 6 7 8 9 10 11 12 13 14 15">Component of the large ribosomal subunit (LSU) (PubMed:26245381, PubMed:27863242, PubMed:29856316, PubMed:30293783, PubMed:30355441, PubMed:30517857, PubMed:31246176, PubMed:31609474, PubMed:31768042, PubMed:33296660, PubMed:35679869, PubMed:35709277, PubMed:36653451). Part of the 5S RNP complex, which is a LSU subcomplex composed of the 5S RNA, RPL5 and RPL11 (PubMed:26245381, PubMed:27863242, PubMed:29856316, PubMed:30293783, PubMed:30355441, PubMed:30517857, PubMed:31246176, PubMed:31609474, PubMed:31768042, PubMed:33296660, PubMed:35679869, PubMed:35709277, PubMed:36653451). Component of a hexameric 5S RNP precursor complex, composed of 5S RNA, RRS1, RPF2/BXDC1, RPL5, RPL11 and HEATR3; this complex acts as a precursor for ribosome assembly (By similarity). Interacts with PML (By similarity). Interacts with MDM2 (via its RanBP2-type zinc finger domain); negatively regulates MDM2-mediated TP53 ubiquitination and degradation (By similarity). Interacts with NOP53; retains RPL11 into the nucleolus (By similarity).</text>
</comment>
<comment type="subcellular location">
    <subcellularLocation>
        <location evidence="1">Nucleus</location>
        <location evidence="1">Nucleolus</location>
    </subcellularLocation>
    <subcellularLocation>
        <location evidence="3 4 5 6 7 8 9 10 11 12 13 14 15">Cytoplasm</location>
    </subcellularLocation>
</comment>
<comment type="similarity">
    <text evidence="16">Belongs to the universal ribosomal protein uL5 family.</text>
</comment>
<gene>
    <name type="primary">RPL11</name>
</gene>
<dbReference type="EMBL" id="AAGW02059824">
    <property type="status" value="NOT_ANNOTATED_CDS"/>
    <property type="molecule type" value="Genomic_DNA"/>
</dbReference>
<dbReference type="EMBL" id="AAGW02059825">
    <property type="status" value="NOT_ANNOTATED_CDS"/>
    <property type="molecule type" value="Genomic_DNA"/>
</dbReference>
<dbReference type="RefSeq" id="XP_008263912.1">
    <property type="nucleotide sequence ID" value="XM_008265690.4"/>
</dbReference>
<dbReference type="PDB" id="3JAG">
    <property type="method" value="EM"/>
    <property type="resolution" value="3.65 A"/>
    <property type="chains" value="J=9-177"/>
</dbReference>
<dbReference type="PDB" id="3JAH">
    <property type="method" value="EM"/>
    <property type="resolution" value="3.45 A"/>
    <property type="chains" value="J=9-177"/>
</dbReference>
<dbReference type="PDB" id="3JAI">
    <property type="method" value="EM"/>
    <property type="resolution" value="3.65 A"/>
    <property type="chains" value="J=9-177"/>
</dbReference>
<dbReference type="PDB" id="5LZS">
    <property type="method" value="EM"/>
    <property type="resolution" value="3.31 A"/>
    <property type="chains" value="J=1-178"/>
</dbReference>
<dbReference type="PDB" id="5LZT">
    <property type="method" value="EM"/>
    <property type="resolution" value="3.65 A"/>
    <property type="chains" value="J=1-178"/>
</dbReference>
<dbReference type="PDB" id="5LZU">
    <property type="method" value="EM"/>
    <property type="resolution" value="3.75 A"/>
    <property type="chains" value="J=1-178"/>
</dbReference>
<dbReference type="PDB" id="5LZV">
    <property type="method" value="EM"/>
    <property type="resolution" value="3.35 A"/>
    <property type="chains" value="J=1-178"/>
</dbReference>
<dbReference type="PDB" id="5LZW">
    <property type="method" value="EM"/>
    <property type="resolution" value="3.53 A"/>
    <property type="chains" value="J=1-178"/>
</dbReference>
<dbReference type="PDB" id="5LZX">
    <property type="method" value="EM"/>
    <property type="resolution" value="3.67 A"/>
    <property type="chains" value="J=1-178"/>
</dbReference>
<dbReference type="PDB" id="5LZY">
    <property type="method" value="EM"/>
    <property type="resolution" value="3.99 A"/>
    <property type="chains" value="J=1-178"/>
</dbReference>
<dbReference type="PDB" id="5LZZ">
    <property type="method" value="EM"/>
    <property type="resolution" value="3.47 A"/>
    <property type="chains" value="J=1-178"/>
</dbReference>
<dbReference type="PDB" id="6D90">
    <property type="method" value="EM"/>
    <property type="resolution" value="3.20 A"/>
    <property type="chains" value="J=1-178"/>
</dbReference>
<dbReference type="PDB" id="6D9J">
    <property type="method" value="EM"/>
    <property type="resolution" value="3.20 A"/>
    <property type="chains" value="J=1-178"/>
</dbReference>
<dbReference type="PDB" id="6FTG">
    <property type="method" value="EM"/>
    <property type="resolution" value="9.10 A"/>
    <property type="chains" value="J=9-177"/>
</dbReference>
<dbReference type="PDB" id="6FTI">
    <property type="method" value="EM"/>
    <property type="resolution" value="4.20 A"/>
    <property type="chains" value="J=9-177"/>
</dbReference>
<dbReference type="PDB" id="6FTJ">
    <property type="method" value="EM"/>
    <property type="resolution" value="4.70 A"/>
    <property type="chains" value="J=9-177"/>
</dbReference>
<dbReference type="PDB" id="6GZ3">
    <property type="method" value="EM"/>
    <property type="resolution" value="3.60 A"/>
    <property type="chains" value="AJ=9-177"/>
</dbReference>
<dbReference type="PDB" id="6HCF">
    <property type="method" value="EM"/>
    <property type="resolution" value="3.90 A"/>
    <property type="chains" value="J3=1-178"/>
</dbReference>
<dbReference type="PDB" id="6HCJ">
    <property type="method" value="EM"/>
    <property type="resolution" value="3.80 A"/>
    <property type="chains" value="J3=1-178"/>
</dbReference>
<dbReference type="PDB" id="6HCM">
    <property type="method" value="EM"/>
    <property type="resolution" value="6.80 A"/>
    <property type="chains" value="J3=1-178"/>
</dbReference>
<dbReference type="PDB" id="6HCQ">
    <property type="method" value="EM"/>
    <property type="resolution" value="6.50 A"/>
    <property type="chains" value="J3=1-178"/>
</dbReference>
<dbReference type="PDB" id="6MTB">
    <property type="method" value="EM"/>
    <property type="resolution" value="3.60 A"/>
    <property type="chains" value="J=1-178"/>
</dbReference>
<dbReference type="PDB" id="6MTC">
    <property type="method" value="EM"/>
    <property type="resolution" value="3.40 A"/>
    <property type="chains" value="J=8-177"/>
</dbReference>
<dbReference type="PDB" id="6MTD">
    <property type="method" value="EM"/>
    <property type="resolution" value="3.30 A"/>
    <property type="chains" value="J=8-177"/>
</dbReference>
<dbReference type="PDB" id="6MTE">
    <property type="method" value="EM"/>
    <property type="resolution" value="3.40 A"/>
    <property type="chains" value="J=8-177"/>
</dbReference>
<dbReference type="PDB" id="6P5I">
    <property type="method" value="EM"/>
    <property type="resolution" value="3.10 A"/>
    <property type="chains" value="AJ=1-178"/>
</dbReference>
<dbReference type="PDB" id="6P5J">
    <property type="method" value="EM"/>
    <property type="resolution" value="3.10 A"/>
    <property type="chains" value="AJ=1-178"/>
</dbReference>
<dbReference type="PDB" id="6P5K">
    <property type="method" value="EM"/>
    <property type="resolution" value="3.10 A"/>
    <property type="chains" value="AJ=1-178"/>
</dbReference>
<dbReference type="PDB" id="6P5N">
    <property type="method" value="EM"/>
    <property type="resolution" value="3.20 A"/>
    <property type="chains" value="AJ=1-178"/>
</dbReference>
<dbReference type="PDB" id="6R5Q">
    <property type="method" value="EM"/>
    <property type="resolution" value="3.00 A"/>
    <property type="chains" value="J=8-177"/>
</dbReference>
<dbReference type="PDB" id="6R6G">
    <property type="method" value="EM"/>
    <property type="resolution" value="3.70 A"/>
    <property type="chains" value="J=8-177"/>
</dbReference>
<dbReference type="PDB" id="6R6P">
    <property type="method" value="EM"/>
    <property type="resolution" value="3.10 A"/>
    <property type="chains" value="J=9-177"/>
</dbReference>
<dbReference type="PDB" id="6R7Q">
    <property type="method" value="EM"/>
    <property type="resolution" value="3.90 A"/>
    <property type="chains" value="J=8-177"/>
</dbReference>
<dbReference type="PDB" id="6SGC">
    <property type="method" value="EM"/>
    <property type="resolution" value="2.80 A"/>
    <property type="chains" value="J2=1-178"/>
</dbReference>
<dbReference type="PDB" id="6T59">
    <property type="method" value="EM"/>
    <property type="resolution" value="3.11 A"/>
    <property type="chains" value="J3=1-178"/>
</dbReference>
<dbReference type="PDB" id="6ZVK">
    <property type="method" value="EM"/>
    <property type="resolution" value="3.49 A"/>
    <property type="chains" value="Y2=9-177"/>
</dbReference>
<dbReference type="PDB" id="7A01">
    <property type="method" value="EM"/>
    <property type="resolution" value="3.60 A"/>
    <property type="chains" value="Y2=9-177"/>
</dbReference>
<dbReference type="PDB" id="7MDZ">
    <property type="method" value="EM"/>
    <property type="resolution" value="3.20 A"/>
    <property type="chains" value="J=1-178"/>
</dbReference>
<dbReference type="PDB" id="7NFX">
    <property type="method" value="EM"/>
    <property type="resolution" value="3.20 A"/>
    <property type="chains" value="J=1-178"/>
</dbReference>
<dbReference type="PDB" id="7NWG">
    <property type="method" value="EM"/>
    <property type="resolution" value="3.80 A"/>
    <property type="chains" value="J3=3-178"/>
</dbReference>
<dbReference type="PDB" id="7NWH">
    <property type="method" value="EM"/>
    <property type="resolution" value="4.10 A"/>
    <property type="chains" value="J=3-178"/>
</dbReference>
<dbReference type="PDB" id="7O7Y">
    <property type="method" value="EM"/>
    <property type="resolution" value="2.20 A"/>
    <property type="chains" value="BJ=1-178"/>
</dbReference>
<dbReference type="PDB" id="7O7Z">
    <property type="method" value="EM"/>
    <property type="resolution" value="2.40 A"/>
    <property type="chains" value="BJ=1-178"/>
</dbReference>
<dbReference type="PDB" id="7O80">
    <property type="method" value="EM"/>
    <property type="resolution" value="2.90 A"/>
    <property type="chains" value="BJ=1-178"/>
</dbReference>
<dbReference type="PDB" id="7O81">
    <property type="method" value="EM"/>
    <property type="resolution" value="3.10 A"/>
    <property type="chains" value="BJ=1-178"/>
</dbReference>
<dbReference type="PDB" id="7OBR">
    <property type="method" value="EM"/>
    <property type="resolution" value="2.80 A"/>
    <property type="chains" value="J=1-178"/>
</dbReference>
<dbReference type="PDB" id="7OYD">
    <property type="method" value="EM"/>
    <property type="resolution" value="2.30 A"/>
    <property type="chains" value="J=1-178"/>
</dbReference>
<dbReference type="PDB" id="7QWQ">
    <property type="method" value="EM"/>
    <property type="resolution" value="2.83 A"/>
    <property type="chains" value="J=1-178"/>
</dbReference>
<dbReference type="PDB" id="7QWR">
    <property type="method" value="EM"/>
    <property type="resolution" value="2.90 A"/>
    <property type="chains" value="J=1-178"/>
</dbReference>
<dbReference type="PDB" id="7QWS">
    <property type="method" value="EM"/>
    <property type="resolution" value="3.40 A"/>
    <property type="chains" value="J=1-178"/>
</dbReference>
<dbReference type="PDB" id="7TM3">
    <property type="method" value="EM"/>
    <property type="resolution" value="3.25 A"/>
    <property type="chains" value="J=1-178"/>
</dbReference>
<dbReference type="PDB" id="7TOQ">
    <property type="method" value="EM"/>
    <property type="resolution" value="3.10 A"/>
    <property type="chains" value="AL11=9-177"/>
</dbReference>
<dbReference type="PDB" id="7TOR">
    <property type="method" value="EM"/>
    <property type="resolution" value="2.90 A"/>
    <property type="chains" value="AL11=8-177"/>
</dbReference>
<dbReference type="PDB" id="7TUT">
    <property type="method" value="EM"/>
    <property type="resolution" value="3.88 A"/>
    <property type="chains" value="J=1-178"/>
</dbReference>
<dbReference type="PDB" id="7UCJ">
    <property type="method" value="EM"/>
    <property type="resolution" value="3.10 A"/>
    <property type="chains" value="J=9-177"/>
</dbReference>
<dbReference type="PDB" id="7UCK">
    <property type="method" value="EM"/>
    <property type="resolution" value="2.80 A"/>
    <property type="chains" value="J=8-177"/>
</dbReference>
<dbReference type="PDB" id="7ZJW">
    <property type="method" value="EM"/>
    <property type="resolution" value="2.80 A"/>
    <property type="chains" value="LM=1-178"/>
</dbReference>
<dbReference type="PDB" id="7ZJX">
    <property type="method" value="EM"/>
    <property type="resolution" value="3.10 A"/>
    <property type="chains" value="LM=1-178"/>
</dbReference>
<dbReference type="PDB" id="8B5L">
    <property type="method" value="EM"/>
    <property type="resolution" value="2.86 A"/>
    <property type="chains" value="J=8-177"/>
</dbReference>
<dbReference type="PDB" id="8B6C">
    <property type="method" value="EM"/>
    <property type="resolution" value="2.79 A"/>
    <property type="chains" value="J=8-177"/>
</dbReference>
<dbReference type="PDB" id="8BHF">
    <property type="method" value="EM"/>
    <property type="resolution" value="3.10 A"/>
    <property type="chains" value="s3=8-177"/>
</dbReference>
<dbReference type="PDB" id="8BPO">
    <property type="method" value="EM"/>
    <property type="resolution" value="2.80 A"/>
    <property type="chains" value="J2=1-178"/>
</dbReference>
<dbReference type="PDB" id="8BTK">
    <property type="method" value="EM"/>
    <property type="resolution" value="3.50 A"/>
    <property type="chains" value="BJ=1-178"/>
</dbReference>
<dbReference type="PDB" id="8P2K">
    <property type="method" value="EM"/>
    <property type="resolution" value="2.90 A"/>
    <property type="chains" value="BJ=1-178"/>
</dbReference>
<dbReference type="PDB" id="8RJB">
    <property type="method" value="EM"/>
    <property type="resolution" value="2.69 A"/>
    <property type="chains" value="J=1-178"/>
</dbReference>
<dbReference type="PDB" id="8RJC">
    <property type="method" value="EM"/>
    <property type="resolution" value="2.90 A"/>
    <property type="chains" value="J=1-178"/>
</dbReference>
<dbReference type="PDB" id="8RJD">
    <property type="method" value="EM"/>
    <property type="resolution" value="2.79 A"/>
    <property type="chains" value="J=1-178"/>
</dbReference>
<dbReference type="PDB" id="8SCB">
    <property type="method" value="EM"/>
    <property type="resolution" value="2.50 A"/>
    <property type="chains" value="J=1-178"/>
</dbReference>
<dbReference type="PDB" id="8VFT">
    <property type="method" value="EM"/>
    <property type="resolution" value="3.30 A"/>
    <property type="chains" value="J=1-178"/>
</dbReference>
<dbReference type="PDB" id="9BDL">
    <property type="method" value="EM"/>
    <property type="resolution" value="2.80 A"/>
    <property type="chains" value="AL11=8-177"/>
</dbReference>
<dbReference type="PDB" id="9BDN">
    <property type="method" value="EM"/>
    <property type="resolution" value="3.10 A"/>
    <property type="chains" value="AL11=8-177"/>
</dbReference>
<dbReference type="PDB" id="9BDP">
    <property type="method" value="EM"/>
    <property type="resolution" value="3.70 A"/>
    <property type="chains" value="AL11=8-177"/>
</dbReference>
<dbReference type="PDB" id="9F1B">
    <property type="method" value="EM"/>
    <property type="resolution" value="3.01 A"/>
    <property type="chains" value="BJ=1-178"/>
</dbReference>
<dbReference type="PDB" id="9F1C">
    <property type="method" value="EM"/>
    <property type="resolution" value="3.78 A"/>
    <property type="chains" value="BJ=1-178"/>
</dbReference>
<dbReference type="PDB" id="9F1D">
    <property type="method" value="EM"/>
    <property type="resolution" value="3.26 A"/>
    <property type="chains" value="BJ=1-178"/>
</dbReference>
<dbReference type="PDBsum" id="3JAG"/>
<dbReference type="PDBsum" id="3JAH"/>
<dbReference type="PDBsum" id="3JAI"/>
<dbReference type="PDBsum" id="5LZS"/>
<dbReference type="PDBsum" id="5LZT"/>
<dbReference type="PDBsum" id="5LZU"/>
<dbReference type="PDBsum" id="5LZV"/>
<dbReference type="PDBsum" id="5LZW"/>
<dbReference type="PDBsum" id="5LZX"/>
<dbReference type="PDBsum" id="5LZY"/>
<dbReference type="PDBsum" id="5LZZ"/>
<dbReference type="PDBsum" id="6D90"/>
<dbReference type="PDBsum" id="6D9J"/>
<dbReference type="PDBsum" id="6FTG"/>
<dbReference type="PDBsum" id="6FTI"/>
<dbReference type="PDBsum" id="6FTJ"/>
<dbReference type="PDBsum" id="6GZ3"/>
<dbReference type="PDBsum" id="6HCF"/>
<dbReference type="PDBsum" id="6HCJ"/>
<dbReference type="PDBsum" id="6HCM"/>
<dbReference type="PDBsum" id="6HCQ"/>
<dbReference type="PDBsum" id="6MTB"/>
<dbReference type="PDBsum" id="6MTC"/>
<dbReference type="PDBsum" id="6MTD"/>
<dbReference type="PDBsum" id="6MTE"/>
<dbReference type="PDBsum" id="6P5I"/>
<dbReference type="PDBsum" id="6P5J"/>
<dbReference type="PDBsum" id="6P5K"/>
<dbReference type="PDBsum" id="6P5N"/>
<dbReference type="PDBsum" id="6R5Q"/>
<dbReference type="PDBsum" id="6R6G"/>
<dbReference type="PDBsum" id="6R6P"/>
<dbReference type="PDBsum" id="6R7Q"/>
<dbReference type="PDBsum" id="6SGC"/>
<dbReference type="PDBsum" id="6T59"/>
<dbReference type="PDBsum" id="6ZVK"/>
<dbReference type="PDBsum" id="7A01"/>
<dbReference type="PDBsum" id="7MDZ"/>
<dbReference type="PDBsum" id="7NFX"/>
<dbReference type="PDBsum" id="7NWG"/>
<dbReference type="PDBsum" id="7NWH"/>
<dbReference type="PDBsum" id="7O7Y"/>
<dbReference type="PDBsum" id="7O7Z"/>
<dbReference type="PDBsum" id="7O80"/>
<dbReference type="PDBsum" id="7O81"/>
<dbReference type="PDBsum" id="7OBR"/>
<dbReference type="PDBsum" id="7OYD"/>
<dbReference type="PDBsum" id="7QWQ"/>
<dbReference type="PDBsum" id="7QWR"/>
<dbReference type="PDBsum" id="7QWS"/>
<dbReference type="PDBsum" id="7TM3"/>
<dbReference type="PDBsum" id="7TOQ"/>
<dbReference type="PDBsum" id="7TOR"/>
<dbReference type="PDBsum" id="7TUT"/>
<dbReference type="PDBsum" id="7UCJ"/>
<dbReference type="PDBsum" id="7UCK"/>
<dbReference type="PDBsum" id="7ZJW"/>
<dbReference type="PDBsum" id="7ZJX"/>
<dbReference type="PDBsum" id="8B5L"/>
<dbReference type="PDBsum" id="8B6C"/>
<dbReference type="PDBsum" id="8BHF"/>
<dbReference type="PDBsum" id="8BPO"/>
<dbReference type="PDBsum" id="8BTK"/>
<dbReference type="PDBsum" id="8P2K"/>
<dbReference type="PDBsum" id="8RJB"/>
<dbReference type="PDBsum" id="8RJC"/>
<dbReference type="PDBsum" id="8RJD"/>
<dbReference type="PDBsum" id="8SCB"/>
<dbReference type="PDBsum" id="8VFT"/>
<dbReference type="PDBsum" id="9BDL"/>
<dbReference type="PDBsum" id="9BDN"/>
<dbReference type="PDBsum" id="9BDP"/>
<dbReference type="PDBsum" id="9F1B"/>
<dbReference type="PDBsum" id="9F1C"/>
<dbReference type="PDBsum" id="9F1D"/>
<dbReference type="EMDB" id="EMD-0098"/>
<dbReference type="EMDB" id="EMD-0099"/>
<dbReference type="EMDB" id="EMD-0100"/>
<dbReference type="EMDB" id="EMD-0192"/>
<dbReference type="EMDB" id="EMD-0194"/>
<dbReference type="EMDB" id="EMD-0195"/>
<dbReference type="EMDB" id="EMD-0197"/>
<dbReference type="EMDB" id="EMD-10181"/>
<dbReference type="EMDB" id="EMD-10380"/>
<dbReference type="EMDB" id="EMD-11459"/>
<dbReference type="EMDB" id="EMD-11590"/>
<dbReference type="EMDB" id="EMD-12303"/>
<dbReference type="EMDB" id="EMD-12631"/>
<dbReference type="EMDB" id="EMD-12632"/>
<dbReference type="EMDB" id="EMD-12756"/>
<dbReference type="EMDB" id="EMD-12757"/>
<dbReference type="EMDB" id="EMD-12758"/>
<dbReference type="EMDB" id="EMD-12759"/>
<dbReference type="EMDB" id="EMD-12801"/>
<dbReference type="EMDB" id="EMD-13114"/>
<dbReference type="EMDB" id="EMD-14191"/>
<dbReference type="EMDB" id="EMD-14192"/>
<dbReference type="EMDB" id="EMD-14193"/>
<dbReference type="EMDB" id="EMD-14751"/>
<dbReference type="EMDB" id="EMD-14752"/>
<dbReference type="EMDB" id="EMD-15860"/>
<dbReference type="EMDB" id="EMD-15863"/>
<dbReference type="EMDB" id="EMD-16052"/>
<dbReference type="EMDB" id="EMD-16155"/>
<dbReference type="EMDB" id="EMD-16232"/>
<dbReference type="EMDB" id="EMD-17367"/>
<dbReference type="EMDB" id="EMD-19195"/>
<dbReference type="EMDB" id="EMD-19197"/>
<dbReference type="EMDB" id="EMD-19198"/>
<dbReference type="EMDB" id="EMD-20255"/>
<dbReference type="EMDB" id="EMD-20256"/>
<dbReference type="EMDB" id="EMD-20257"/>
<dbReference type="EMDB" id="EMD-20258"/>
<dbReference type="EMDB" id="EMD-23785"/>
<dbReference type="EMDB" id="EMD-25994"/>
<dbReference type="EMDB" id="EMD-26035"/>
<dbReference type="EMDB" id="EMD-26036"/>
<dbReference type="EMDB" id="EMD-26133"/>
<dbReference type="EMDB" id="EMD-26444"/>
<dbReference type="EMDB" id="EMD-26445"/>
<dbReference type="EMDB" id="EMD-40344"/>
<dbReference type="EMDB" id="EMD-4130"/>
<dbReference type="EMDB" id="EMD-4131"/>
<dbReference type="EMDB" id="EMD-4132"/>
<dbReference type="EMDB" id="EMD-4133"/>
<dbReference type="EMDB" id="EMD-4134"/>
<dbReference type="EMDB" id="EMD-4135"/>
<dbReference type="EMDB" id="EMD-4136"/>
<dbReference type="EMDB" id="EMD-4137"/>
<dbReference type="EMDB" id="EMD-4300"/>
<dbReference type="EMDB" id="EMD-4315"/>
<dbReference type="EMDB" id="EMD-4316"/>
<dbReference type="EMDB" id="EMD-4317"/>
<dbReference type="EMDB" id="EMD-43189"/>
<dbReference type="EMDB" id="EMD-44461"/>
<dbReference type="EMDB" id="EMD-44463"/>
<dbReference type="EMDB" id="EMD-44464"/>
<dbReference type="EMDB" id="EMD-4729"/>
<dbReference type="EMDB" id="EMD-4735"/>
<dbReference type="EMDB" id="EMD-4737"/>
<dbReference type="EMDB" id="EMD-4745"/>
<dbReference type="EMDB" id="EMD-50124"/>
<dbReference type="EMDB" id="EMD-50125"/>
<dbReference type="EMDB" id="EMD-50126"/>
<dbReference type="EMDB" id="EMD-7834"/>
<dbReference type="EMDB" id="EMD-7836"/>
<dbReference type="EMDB" id="EMD-9237"/>
<dbReference type="EMDB" id="EMD-9239"/>
<dbReference type="EMDB" id="EMD-9240"/>
<dbReference type="EMDB" id="EMD-9242"/>
<dbReference type="SMR" id="G1TUB8"/>
<dbReference type="IntAct" id="G1TUB8">
    <property type="interactions" value="1"/>
</dbReference>
<dbReference type="PaxDb" id="9986-ENSOCUP00000020643"/>
<dbReference type="Ensembl" id="ENSOCUT00000024306.3">
    <property type="protein sequence ID" value="ENSOCUP00000020643.2"/>
    <property type="gene ID" value="ENSOCUG00000012707.4"/>
</dbReference>
<dbReference type="GeneID" id="100345859"/>
<dbReference type="KEGG" id="ocu:100345859"/>
<dbReference type="CTD" id="6135"/>
<dbReference type="eggNOG" id="KOG0397">
    <property type="taxonomic scope" value="Eukaryota"/>
</dbReference>
<dbReference type="GeneTree" id="ENSGT00390000002428"/>
<dbReference type="HOGENOM" id="CLU_061015_3_0_1"/>
<dbReference type="OMA" id="NPMKELK"/>
<dbReference type="OrthoDB" id="1734943at2759"/>
<dbReference type="TreeFam" id="TF300017"/>
<dbReference type="Proteomes" id="UP000001811">
    <property type="component" value="Chromosome 13"/>
</dbReference>
<dbReference type="Bgee" id="ENSOCUG00000012707">
    <property type="expression patterns" value="Expressed in left lung and 15 other cell types or tissues"/>
</dbReference>
<dbReference type="ExpressionAtlas" id="G1TUB8">
    <property type="expression patterns" value="baseline"/>
</dbReference>
<dbReference type="GO" id="GO:0005737">
    <property type="term" value="C:cytoplasm"/>
    <property type="evidence" value="ECO:0007669"/>
    <property type="project" value="UniProtKB-SubCell"/>
</dbReference>
<dbReference type="GO" id="GO:0005730">
    <property type="term" value="C:nucleolus"/>
    <property type="evidence" value="ECO:0007669"/>
    <property type="project" value="UniProtKB-SubCell"/>
</dbReference>
<dbReference type="GO" id="GO:1990904">
    <property type="term" value="C:ribonucleoprotein complex"/>
    <property type="evidence" value="ECO:0007669"/>
    <property type="project" value="UniProtKB-KW"/>
</dbReference>
<dbReference type="GO" id="GO:0005840">
    <property type="term" value="C:ribosome"/>
    <property type="evidence" value="ECO:0007669"/>
    <property type="project" value="UniProtKB-KW"/>
</dbReference>
<dbReference type="GO" id="GO:0019843">
    <property type="term" value="F:rRNA binding"/>
    <property type="evidence" value="ECO:0007669"/>
    <property type="project" value="UniProtKB-KW"/>
</dbReference>
<dbReference type="GO" id="GO:0003735">
    <property type="term" value="F:structural constituent of ribosome"/>
    <property type="evidence" value="ECO:0007669"/>
    <property type="project" value="InterPro"/>
</dbReference>
<dbReference type="GO" id="GO:0006412">
    <property type="term" value="P:translation"/>
    <property type="evidence" value="ECO:0007669"/>
    <property type="project" value="InterPro"/>
</dbReference>
<dbReference type="FunFam" id="3.30.1440.10:FF:000002">
    <property type="entry name" value="60S ribosomal protein L11"/>
    <property type="match status" value="1"/>
</dbReference>
<dbReference type="Gene3D" id="3.30.1440.10">
    <property type="match status" value="1"/>
</dbReference>
<dbReference type="InterPro" id="IPR002132">
    <property type="entry name" value="Ribosomal_uL5"/>
</dbReference>
<dbReference type="InterPro" id="IPR031309">
    <property type="entry name" value="Ribosomal_uL5_C"/>
</dbReference>
<dbReference type="InterPro" id="IPR020929">
    <property type="entry name" value="Ribosomal_uL5_CS"/>
</dbReference>
<dbReference type="InterPro" id="IPR022803">
    <property type="entry name" value="Ribosomal_uL5_dom_sf"/>
</dbReference>
<dbReference type="InterPro" id="IPR031310">
    <property type="entry name" value="Ribosomal_uL5_N"/>
</dbReference>
<dbReference type="NCBIfam" id="NF003258">
    <property type="entry name" value="PRK04219.1"/>
    <property type="match status" value="1"/>
</dbReference>
<dbReference type="PANTHER" id="PTHR11994">
    <property type="entry name" value="60S RIBOSOMAL PROTEIN L11-RELATED"/>
    <property type="match status" value="1"/>
</dbReference>
<dbReference type="Pfam" id="PF00281">
    <property type="entry name" value="Ribosomal_L5"/>
    <property type="match status" value="1"/>
</dbReference>
<dbReference type="Pfam" id="PF00673">
    <property type="entry name" value="Ribosomal_L5_C"/>
    <property type="match status" value="1"/>
</dbReference>
<dbReference type="PIRSF" id="PIRSF002161">
    <property type="entry name" value="Ribosomal_L5"/>
    <property type="match status" value="1"/>
</dbReference>
<dbReference type="SUPFAM" id="SSF55282">
    <property type="entry name" value="RL5-like"/>
    <property type="match status" value="1"/>
</dbReference>
<dbReference type="PROSITE" id="PS00358">
    <property type="entry name" value="RIBOSOMAL_L5"/>
    <property type="match status" value="1"/>
</dbReference>
<evidence type="ECO:0000250" key="1">
    <source>
        <dbReference type="UniProtKB" id="P62913"/>
    </source>
</evidence>
<evidence type="ECO:0000250" key="2">
    <source>
        <dbReference type="UniProtKB" id="Q9CXW4"/>
    </source>
</evidence>
<evidence type="ECO:0000269" key="3">
    <source>
    </source>
</evidence>
<evidence type="ECO:0000269" key="4">
    <source>
    </source>
</evidence>
<evidence type="ECO:0000269" key="5">
    <source>
    </source>
</evidence>
<evidence type="ECO:0000269" key="6">
    <source>
    </source>
</evidence>
<evidence type="ECO:0000269" key="7">
    <source>
    </source>
</evidence>
<evidence type="ECO:0000269" key="8">
    <source>
    </source>
</evidence>
<evidence type="ECO:0000269" key="9">
    <source>
    </source>
</evidence>
<evidence type="ECO:0000269" key="10">
    <source>
    </source>
</evidence>
<evidence type="ECO:0000269" key="11">
    <source>
    </source>
</evidence>
<evidence type="ECO:0000269" key="12">
    <source>
    </source>
</evidence>
<evidence type="ECO:0000269" key="13">
    <source>
    </source>
</evidence>
<evidence type="ECO:0000269" key="14">
    <source>
    </source>
</evidence>
<evidence type="ECO:0000269" key="15">
    <source>
    </source>
</evidence>
<evidence type="ECO:0000305" key="16"/>
<evidence type="ECO:0007744" key="17">
    <source>
        <dbReference type="PDB" id="3JAG"/>
    </source>
</evidence>
<evidence type="ECO:0007744" key="18">
    <source>
        <dbReference type="PDB" id="3JAH"/>
    </source>
</evidence>
<evidence type="ECO:0007744" key="19">
    <source>
        <dbReference type="PDB" id="5LZU"/>
    </source>
</evidence>
<evidence type="ECO:0007744" key="20">
    <source>
        <dbReference type="PDB" id="6D90"/>
    </source>
</evidence>
<evidence type="ECO:0007744" key="21">
    <source>
        <dbReference type="PDB" id="6D9J"/>
    </source>
</evidence>
<evidence type="ECO:0007744" key="22">
    <source>
        <dbReference type="PDB" id="6FTI"/>
    </source>
</evidence>
<evidence type="ECO:0007744" key="23">
    <source>
        <dbReference type="PDB" id="6GZ3"/>
    </source>
</evidence>
<evidence type="ECO:0007744" key="24">
    <source>
        <dbReference type="PDB" id="6HCF"/>
    </source>
</evidence>
<evidence type="ECO:0007744" key="25">
    <source>
        <dbReference type="PDB" id="6HCJ"/>
    </source>
</evidence>
<evidence type="ECO:0007744" key="26">
    <source>
        <dbReference type="PDB" id="6MTB"/>
    </source>
</evidence>
<evidence type="ECO:0007744" key="27">
    <source>
        <dbReference type="PDB" id="6MTC"/>
    </source>
</evidence>
<evidence type="ECO:0007744" key="28">
    <source>
        <dbReference type="PDB" id="6R5Q"/>
    </source>
</evidence>
<evidence type="ECO:0007744" key="29">
    <source>
        <dbReference type="PDB" id="6R6G"/>
    </source>
</evidence>
<evidence type="ECO:0007744" key="30">
    <source>
        <dbReference type="PDB" id="6SGC"/>
    </source>
</evidence>
<evidence type="ECO:0007744" key="31">
    <source>
        <dbReference type="PDB" id="6ZVK"/>
    </source>
</evidence>
<evidence type="ECO:0007744" key="32">
    <source>
        <dbReference type="PDB" id="7A01"/>
    </source>
</evidence>
<evidence type="ECO:0007744" key="33">
    <source>
        <dbReference type="PDB" id="7OYD"/>
    </source>
</evidence>
<evidence type="ECO:0007744" key="34">
    <source>
        <dbReference type="PDB" id="7UCJ"/>
    </source>
</evidence>
<evidence type="ECO:0007744" key="35">
    <source>
        <dbReference type="PDB" id="7UCK"/>
    </source>
</evidence>
<evidence type="ECO:0007744" key="36">
    <source>
        <dbReference type="PDB" id="7ZJW"/>
    </source>
</evidence>
<evidence type="ECO:0007744" key="37">
    <source>
        <dbReference type="PDB" id="7ZJX"/>
    </source>
</evidence>
<organism>
    <name type="scientific">Oryctolagus cuniculus</name>
    <name type="common">Rabbit</name>
    <dbReference type="NCBI Taxonomy" id="9986"/>
    <lineage>
        <taxon>Eukaryota</taxon>
        <taxon>Metazoa</taxon>
        <taxon>Chordata</taxon>
        <taxon>Craniata</taxon>
        <taxon>Vertebrata</taxon>
        <taxon>Euteleostomi</taxon>
        <taxon>Mammalia</taxon>
        <taxon>Eutheria</taxon>
        <taxon>Euarchontoglires</taxon>
        <taxon>Glires</taxon>
        <taxon>Lagomorpha</taxon>
        <taxon>Leporidae</taxon>
        <taxon>Oryctolagus</taxon>
    </lineage>
</organism>
<name>RL11_RABIT</name>
<proteinExistence type="evidence at protein level"/>